<name>ATPB_ALIB4</name>
<dbReference type="EC" id="7.1.2.2" evidence="1"/>
<dbReference type="EMBL" id="CP000361">
    <property type="protein sequence ID" value="ABV67843.1"/>
    <property type="molecule type" value="Genomic_DNA"/>
</dbReference>
<dbReference type="RefSeq" id="WP_004509827.1">
    <property type="nucleotide sequence ID" value="NC_009850.1"/>
</dbReference>
<dbReference type="SMR" id="A8EV70"/>
<dbReference type="STRING" id="367737.Abu_1595"/>
<dbReference type="GeneID" id="24303965"/>
<dbReference type="KEGG" id="abu:Abu_1595"/>
<dbReference type="eggNOG" id="COG0055">
    <property type="taxonomic scope" value="Bacteria"/>
</dbReference>
<dbReference type="HOGENOM" id="CLU_022398_0_2_7"/>
<dbReference type="Proteomes" id="UP000001136">
    <property type="component" value="Chromosome"/>
</dbReference>
<dbReference type="GO" id="GO:0005886">
    <property type="term" value="C:plasma membrane"/>
    <property type="evidence" value="ECO:0007669"/>
    <property type="project" value="UniProtKB-SubCell"/>
</dbReference>
<dbReference type="GO" id="GO:0045259">
    <property type="term" value="C:proton-transporting ATP synthase complex"/>
    <property type="evidence" value="ECO:0007669"/>
    <property type="project" value="UniProtKB-KW"/>
</dbReference>
<dbReference type="GO" id="GO:0005524">
    <property type="term" value="F:ATP binding"/>
    <property type="evidence" value="ECO:0007669"/>
    <property type="project" value="UniProtKB-UniRule"/>
</dbReference>
<dbReference type="GO" id="GO:0016887">
    <property type="term" value="F:ATP hydrolysis activity"/>
    <property type="evidence" value="ECO:0007669"/>
    <property type="project" value="InterPro"/>
</dbReference>
<dbReference type="GO" id="GO:0046933">
    <property type="term" value="F:proton-transporting ATP synthase activity, rotational mechanism"/>
    <property type="evidence" value="ECO:0007669"/>
    <property type="project" value="UniProtKB-UniRule"/>
</dbReference>
<dbReference type="CDD" id="cd18110">
    <property type="entry name" value="ATP-synt_F1_beta_C"/>
    <property type="match status" value="1"/>
</dbReference>
<dbReference type="CDD" id="cd18115">
    <property type="entry name" value="ATP-synt_F1_beta_N"/>
    <property type="match status" value="1"/>
</dbReference>
<dbReference type="CDD" id="cd01133">
    <property type="entry name" value="F1-ATPase_beta_CD"/>
    <property type="match status" value="1"/>
</dbReference>
<dbReference type="FunFam" id="1.10.1140.10:FF:000001">
    <property type="entry name" value="ATP synthase subunit beta"/>
    <property type="match status" value="1"/>
</dbReference>
<dbReference type="FunFam" id="3.40.50.300:FF:000004">
    <property type="entry name" value="ATP synthase subunit beta"/>
    <property type="match status" value="1"/>
</dbReference>
<dbReference type="Gene3D" id="2.40.10.170">
    <property type="match status" value="1"/>
</dbReference>
<dbReference type="Gene3D" id="1.10.1140.10">
    <property type="entry name" value="Bovine Mitochondrial F1-atpase, Atp Synthase Beta Chain, Chain D, domain 3"/>
    <property type="match status" value="1"/>
</dbReference>
<dbReference type="Gene3D" id="3.40.50.300">
    <property type="entry name" value="P-loop containing nucleotide triphosphate hydrolases"/>
    <property type="match status" value="1"/>
</dbReference>
<dbReference type="HAMAP" id="MF_01347">
    <property type="entry name" value="ATP_synth_beta_bact"/>
    <property type="match status" value="1"/>
</dbReference>
<dbReference type="InterPro" id="IPR003593">
    <property type="entry name" value="AAA+_ATPase"/>
</dbReference>
<dbReference type="InterPro" id="IPR055190">
    <property type="entry name" value="ATP-synt_VA_C"/>
</dbReference>
<dbReference type="InterPro" id="IPR005722">
    <property type="entry name" value="ATP_synth_F1_bsu"/>
</dbReference>
<dbReference type="InterPro" id="IPR020003">
    <property type="entry name" value="ATPase_a/bsu_AS"/>
</dbReference>
<dbReference type="InterPro" id="IPR050053">
    <property type="entry name" value="ATPase_alpha/beta_chains"/>
</dbReference>
<dbReference type="InterPro" id="IPR004100">
    <property type="entry name" value="ATPase_F1/V1/A1_a/bsu_N"/>
</dbReference>
<dbReference type="InterPro" id="IPR036121">
    <property type="entry name" value="ATPase_F1/V1/A1_a/bsu_N_sf"/>
</dbReference>
<dbReference type="InterPro" id="IPR000194">
    <property type="entry name" value="ATPase_F1/V1/A1_a/bsu_nucl-bd"/>
</dbReference>
<dbReference type="InterPro" id="IPR024034">
    <property type="entry name" value="ATPase_F1/V1_b/a_C"/>
</dbReference>
<dbReference type="InterPro" id="IPR027417">
    <property type="entry name" value="P-loop_NTPase"/>
</dbReference>
<dbReference type="NCBIfam" id="TIGR01039">
    <property type="entry name" value="atpD"/>
    <property type="match status" value="1"/>
</dbReference>
<dbReference type="PANTHER" id="PTHR15184">
    <property type="entry name" value="ATP SYNTHASE"/>
    <property type="match status" value="1"/>
</dbReference>
<dbReference type="PANTHER" id="PTHR15184:SF71">
    <property type="entry name" value="ATP SYNTHASE SUBUNIT BETA, MITOCHONDRIAL"/>
    <property type="match status" value="1"/>
</dbReference>
<dbReference type="Pfam" id="PF00006">
    <property type="entry name" value="ATP-synt_ab"/>
    <property type="match status" value="1"/>
</dbReference>
<dbReference type="Pfam" id="PF02874">
    <property type="entry name" value="ATP-synt_ab_N"/>
    <property type="match status" value="1"/>
</dbReference>
<dbReference type="Pfam" id="PF22919">
    <property type="entry name" value="ATP-synt_VA_C"/>
    <property type="match status" value="1"/>
</dbReference>
<dbReference type="PIRSF" id="PIRSF039072">
    <property type="entry name" value="ATPase_subunit_beta"/>
    <property type="match status" value="1"/>
</dbReference>
<dbReference type="SMART" id="SM00382">
    <property type="entry name" value="AAA"/>
    <property type="match status" value="1"/>
</dbReference>
<dbReference type="SUPFAM" id="SSF47917">
    <property type="entry name" value="C-terminal domain of alpha and beta subunits of F1 ATP synthase"/>
    <property type="match status" value="1"/>
</dbReference>
<dbReference type="SUPFAM" id="SSF50615">
    <property type="entry name" value="N-terminal domain of alpha and beta subunits of F1 ATP synthase"/>
    <property type="match status" value="1"/>
</dbReference>
<dbReference type="SUPFAM" id="SSF52540">
    <property type="entry name" value="P-loop containing nucleoside triphosphate hydrolases"/>
    <property type="match status" value="1"/>
</dbReference>
<dbReference type="PROSITE" id="PS00152">
    <property type="entry name" value="ATPASE_ALPHA_BETA"/>
    <property type="match status" value="1"/>
</dbReference>
<sequence length="464" mass="50313">MKGKVIQVMGPVVDVEFDGYLPEINEAIDVTLADASKDRLVLEVAAHIGDSRVRTIAMDMTEGLVRGQECIATGGPIKVPVGEAVLGRIFNVIGDPVDEGSAIPADTERWSIHRSAPTFEEQSTKTEMFETGIKVVDLLAPYSKGGKVGLFGGAGVGKTVIIMELIHNVAFKHSGYSVFAGVGERTREGNDLYHEMKDSNVLDKVALCYGQMSEPPGARNRIALTGLTMAEYFRDEKGLDVLMFIDNIFRFAQSGSEMSALLGRIPSAVGYQPTLASEMGKLQERITSTSKGSITSVQAVYVPADDLTDPAPASVFAHLDATTVLNRKIAEKGIYPAVDPLDSTSRILSADIIGQEHYNTARGVQSVLQKYKDLQDIIAILGMDELSESDKLVVARARKIERFLSQPFFVAEVFTGSPGKYVELKDTIAGFQGILDGKYDNIPEMAFYMVGGIDEVLAKAEKMK</sequence>
<comment type="function">
    <text evidence="1">Produces ATP from ADP in the presence of a proton gradient across the membrane. The catalytic sites are hosted primarily by the beta subunits.</text>
</comment>
<comment type="catalytic activity">
    <reaction evidence="1">
        <text>ATP + H2O + 4 H(+)(in) = ADP + phosphate + 5 H(+)(out)</text>
        <dbReference type="Rhea" id="RHEA:57720"/>
        <dbReference type="ChEBI" id="CHEBI:15377"/>
        <dbReference type="ChEBI" id="CHEBI:15378"/>
        <dbReference type="ChEBI" id="CHEBI:30616"/>
        <dbReference type="ChEBI" id="CHEBI:43474"/>
        <dbReference type="ChEBI" id="CHEBI:456216"/>
        <dbReference type="EC" id="7.1.2.2"/>
    </reaction>
</comment>
<comment type="subunit">
    <text evidence="1">F-type ATPases have 2 components, CF(1) - the catalytic core - and CF(0) - the membrane proton channel. CF(1) has five subunits: alpha(3), beta(3), gamma(1), delta(1), epsilon(1). CF(0) has three main subunits: a(1), b(2) and c(9-12). The alpha and beta chains form an alternating ring which encloses part of the gamma chain. CF(1) is attached to CF(0) by a central stalk formed by the gamma and epsilon chains, while a peripheral stalk is formed by the delta and b chains.</text>
</comment>
<comment type="subcellular location">
    <subcellularLocation>
        <location evidence="1">Cell inner membrane</location>
        <topology evidence="1">Peripheral membrane protein</topology>
    </subcellularLocation>
</comment>
<comment type="similarity">
    <text evidence="1">Belongs to the ATPase alpha/beta chains family.</text>
</comment>
<accession>A8EV70</accession>
<gene>
    <name evidence="1" type="primary">atpD</name>
    <name type="ordered locus">Abu_1595</name>
</gene>
<proteinExistence type="inferred from homology"/>
<keyword id="KW-0066">ATP synthesis</keyword>
<keyword id="KW-0067">ATP-binding</keyword>
<keyword id="KW-0997">Cell inner membrane</keyword>
<keyword id="KW-1003">Cell membrane</keyword>
<keyword id="KW-0139">CF(1)</keyword>
<keyword id="KW-0375">Hydrogen ion transport</keyword>
<keyword id="KW-0406">Ion transport</keyword>
<keyword id="KW-0472">Membrane</keyword>
<keyword id="KW-0547">Nucleotide-binding</keyword>
<keyword id="KW-1185">Reference proteome</keyword>
<keyword id="KW-1278">Translocase</keyword>
<keyword id="KW-0813">Transport</keyword>
<feature type="chain" id="PRO_1000143471" description="ATP synthase subunit beta">
    <location>
        <begin position="1"/>
        <end position="464"/>
    </location>
</feature>
<feature type="binding site" evidence="1">
    <location>
        <begin position="152"/>
        <end position="159"/>
    </location>
    <ligand>
        <name>ATP</name>
        <dbReference type="ChEBI" id="CHEBI:30616"/>
    </ligand>
</feature>
<organism>
    <name type="scientific">Aliarcobacter butzleri (strain RM4018)</name>
    <name type="common">Arcobacter butzleri</name>
    <dbReference type="NCBI Taxonomy" id="367737"/>
    <lineage>
        <taxon>Bacteria</taxon>
        <taxon>Pseudomonadati</taxon>
        <taxon>Campylobacterota</taxon>
        <taxon>Epsilonproteobacteria</taxon>
        <taxon>Campylobacterales</taxon>
        <taxon>Arcobacteraceae</taxon>
        <taxon>Aliarcobacter</taxon>
    </lineage>
</organism>
<reference key="1">
    <citation type="journal article" date="2007" name="PLoS ONE">
        <title>The complete genome sequence and analysis of the Epsilonproteobacterium Arcobacter butzleri.</title>
        <authorList>
            <person name="Miller W.G."/>
            <person name="Parker C.T."/>
            <person name="Rubenfield M."/>
            <person name="Mendz G.L."/>
            <person name="Woesten M.M.S.M."/>
            <person name="Ussery D.W."/>
            <person name="Stolz J.F."/>
            <person name="Binnewies T.T."/>
            <person name="Hallin P.F."/>
            <person name="Wang G."/>
            <person name="Malek J.A."/>
            <person name="Rogosin A."/>
            <person name="Stanker L.H."/>
            <person name="Mandrell R.E."/>
        </authorList>
    </citation>
    <scope>NUCLEOTIDE SEQUENCE [LARGE SCALE GENOMIC DNA]</scope>
    <source>
        <strain>RM4018</strain>
    </source>
</reference>
<evidence type="ECO:0000255" key="1">
    <source>
        <dbReference type="HAMAP-Rule" id="MF_01347"/>
    </source>
</evidence>
<protein>
    <recommendedName>
        <fullName evidence="1">ATP synthase subunit beta</fullName>
        <ecNumber evidence="1">7.1.2.2</ecNumber>
    </recommendedName>
    <alternativeName>
        <fullName evidence="1">ATP synthase F1 sector subunit beta</fullName>
    </alternativeName>
    <alternativeName>
        <fullName evidence="1">F-ATPase subunit beta</fullName>
    </alternativeName>
</protein>